<comment type="function">
    <text>Stimulates the secretion of gonadotropins; it stimulates the secretion of both luteinizing and follicle-stimulating hormones.</text>
</comment>
<comment type="subcellular location">
    <subcellularLocation>
        <location>Secreted</location>
    </subcellularLocation>
</comment>
<comment type="PTM">
    <molecule>Gonadoliberin-1</molecule>
    <text evidence="2">The precursor is cleaved by ACE, which removes the Gly-Lys-Arg peptide at the C-terminus, leading to mature hormone. The mature form of Gonadoliberin-1 is also cleaved and degraded by ACE.</text>
</comment>
<comment type="similarity">
    <text evidence="4">Belongs to the GnRH family.</text>
</comment>
<dbReference type="EMBL" id="AF033346">
    <property type="protein sequence ID" value="AAB87688.1"/>
    <property type="molecule type" value="mRNA"/>
</dbReference>
<dbReference type="RefSeq" id="NP_001166427.1">
    <property type="nucleotide sequence ID" value="NM_001172956.1"/>
</dbReference>
<dbReference type="SMR" id="O54713"/>
<dbReference type="FunCoup" id="O54713">
    <property type="interactions" value="441"/>
</dbReference>
<dbReference type="STRING" id="10141.ENSCPOP00000014012"/>
<dbReference type="Ensembl" id="ENSCPOT00000015690.3">
    <property type="protein sequence ID" value="ENSCPOP00000014012.2"/>
    <property type="gene ID" value="ENSCPOG00000015538.4"/>
</dbReference>
<dbReference type="GeneID" id="100135531"/>
<dbReference type="KEGG" id="cpoc:100135531"/>
<dbReference type="CTD" id="2796"/>
<dbReference type="VEuPathDB" id="HostDB:ENSCPOG00000015538"/>
<dbReference type="eggNOG" id="ENOG502S8C8">
    <property type="taxonomic scope" value="Eukaryota"/>
</dbReference>
<dbReference type="GeneTree" id="ENSGT00390000008225"/>
<dbReference type="HOGENOM" id="CLU_2412553_0_0_1"/>
<dbReference type="InParanoid" id="O54713"/>
<dbReference type="OMA" id="FECTVHQ"/>
<dbReference type="OrthoDB" id="8716567at2759"/>
<dbReference type="TreeFam" id="TF330934"/>
<dbReference type="Proteomes" id="UP000005447">
    <property type="component" value="Unassembled WGS sequence"/>
</dbReference>
<dbReference type="Bgee" id="ENSCPOG00000015538">
    <property type="expression patterns" value="Expressed in hypothalamus and 1 other cell type or tissue"/>
</dbReference>
<dbReference type="GO" id="GO:0005615">
    <property type="term" value="C:extracellular space"/>
    <property type="evidence" value="ECO:0000250"/>
    <property type="project" value="UniProtKB"/>
</dbReference>
<dbReference type="GO" id="GO:0005183">
    <property type="term" value="F:gonadotropin hormone-releasing hormone activity"/>
    <property type="evidence" value="ECO:0007669"/>
    <property type="project" value="InterPro"/>
</dbReference>
<dbReference type="GO" id="GO:0031530">
    <property type="term" value="F:gonadotropin-releasing hormone receptor binding"/>
    <property type="evidence" value="ECO:0007669"/>
    <property type="project" value="TreeGrafter"/>
</dbReference>
<dbReference type="GO" id="GO:2001223">
    <property type="term" value="P:negative regulation of neuron migration"/>
    <property type="evidence" value="ECO:0007669"/>
    <property type="project" value="Ensembl"/>
</dbReference>
<dbReference type="GO" id="GO:0010468">
    <property type="term" value="P:regulation of gene expression"/>
    <property type="evidence" value="ECO:0007669"/>
    <property type="project" value="Ensembl"/>
</dbReference>
<dbReference type="GO" id="GO:2000354">
    <property type="term" value="P:regulation of ovarian follicle development"/>
    <property type="evidence" value="ECO:0007669"/>
    <property type="project" value="Ensembl"/>
</dbReference>
<dbReference type="GO" id="GO:0045471">
    <property type="term" value="P:response to ethanol"/>
    <property type="evidence" value="ECO:0007669"/>
    <property type="project" value="Ensembl"/>
</dbReference>
<dbReference type="GO" id="GO:0048545">
    <property type="term" value="P:response to steroid hormone"/>
    <property type="evidence" value="ECO:0007669"/>
    <property type="project" value="Ensembl"/>
</dbReference>
<dbReference type="InterPro" id="IPR002012">
    <property type="entry name" value="GnRH"/>
</dbReference>
<dbReference type="InterPro" id="IPR019792">
    <property type="entry name" value="Gonadoliberin"/>
</dbReference>
<dbReference type="InterPro" id="IPR004079">
    <property type="entry name" value="Gonadoliberin_I_precursor"/>
</dbReference>
<dbReference type="PANTHER" id="PTHR10522">
    <property type="entry name" value="GONADOLIBERIN"/>
    <property type="match status" value="1"/>
</dbReference>
<dbReference type="PANTHER" id="PTHR10522:SF0">
    <property type="entry name" value="PROGONADOLIBERIN-1"/>
    <property type="match status" value="1"/>
</dbReference>
<dbReference type="PRINTS" id="PR01541">
    <property type="entry name" value="GONADOLIBRNI"/>
</dbReference>
<dbReference type="PROSITE" id="PS00473">
    <property type="entry name" value="GNRH"/>
    <property type="match status" value="1"/>
</dbReference>
<evidence type="ECO:0000250" key="1"/>
<evidence type="ECO:0000250" key="2">
    <source>
        <dbReference type="UniProtKB" id="P01148"/>
    </source>
</evidence>
<evidence type="ECO:0000255" key="3"/>
<evidence type="ECO:0000305" key="4"/>
<accession>O54713</accession>
<protein>
    <recommendedName>
        <fullName>Progonadoliberin-1</fullName>
    </recommendedName>
    <alternativeName>
        <fullName>Progonadoliberin I</fullName>
    </alternativeName>
    <component>
        <recommendedName>
            <fullName>Gonadoliberin-1</fullName>
        </recommendedName>
        <alternativeName>
            <fullName>Gonadoliberin I</fullName>
        </alternativeName>
        <alternativeName>
            <fullName>Gonadotropin-releasing hormone I</fullName>
            <shortName>GnRH-I</shortName>
        </alternativeName>
        <alternativeName>
            <fullName>Luliberin I</fullName>
        </alternativeName>
        <alternativeName>
            <fullName>Luteinizing hormone-releasing hormone I</fullName>
            <shortName>LH-RH I</shortName>
        </alternativeName>
    </component>
    <component>
        <recommendedName>
            <fullName>GnRH-associated peptide 1</fullName>
        </recommendedName>
        <alternativeName>
            <fullName>GnRH-associated peptide I</fullName>
        </alternativeName>
    </component>
</protein>
<keyword id="KW-0027">Amidation</keyword>
<keyword id="KW-0165">Cleavage on pair of basic residues</keyword>
<keyword id="KW-0372">Hormone</keyword>
<keyword id="KW-0873">Pyrrolidone carboxylic acid</keyword>
<keyword id="KW-1185">Reference proteome</keyword>
<keyword id="KW-0964">Secreted</keyword>
<keyword id="KW-0732">Signal</keyword>
<proteinExistence type="inferred from homology"/>
<organism>
    <name type="scientific">Cavia porcellus</name>
    <name type="common">Guinea pig</name>
    <dbReference type="NCBI Taxonomy" id="10141"/>
    <lineage>
        <taxon>Eukaryota</taxon>
        <taxon>Metazoa</taxon>
        <taxon>Chordata</taxon>
        <taxon>Craniata</taxon>
        <taxon>Vertebrata</taxon>
        <taxon>Euteleostomi</taxon>
        <taxon>Mammalia</taxon>
        <taxon>Eutheria</taxon>
        <taxon>Euarchontoglires</taxon>
        <taxon>Glires</taxon>
        <taxon>Rodentia</taxon>
        <taxon>Hystricomorpha</taxon>
        <taxon>Caviidae</taxon>
        <taxon>Cavia</taxon>
    </lineage>
</organism>
<feature type="signal peptide" evidence="3">
    <location>
        <begin position="1"/>
        <end position="23"/>
    </location>
</feature>
<feature type="chain" id="PRO_0000012392" description="Progonadoliberin-1">
    <location>
        <begin position="24"/>
        <end position="92"/>
    </location>
</feature>
<feature type="peptide" id="PRO_0000012393" description="Gonadoliberin-1">
    <location>
        <begin position="24"/>
        <end position="33"/>
    </location>
</feature>
<feature type="peptide" id="PRO_0000012394" description="GnRH-associated peptide 1">
    <location>
        <begin position="37"/>
        <end position="92"/>
    </location>
</feature>
<feature type="site" description="Cleavage; by ACE" evidence="2">
    <location>
        <begin position="26"/>
        <end position="27"/>
    </location>
</feature>
<feature type="site" description="Appears to be essential for biological activity" evidence="1">
    <location>
        <position position="26"/>
    </location>
</feature>
<feature type="site" description="Cleavage; by ACE" evidence="2">
    <location>
        <begin position="28"/>
        <end position="29"/>
    </location>
</feature>
<feature type="site" description="Cleavage; by ACE" evidence="2">
    <location>
        <begin position="30"/>
        <end position="31"/>
    </location>
</feature>
<feature type="site" description="Cleavage; by ACE" evidence="2">
    <location>
        <begin position="33"/>
        <end position="34"/>
    </location>
</feature>
<feature type="modified residue" description="Pyrrolidone carboxylic acid" evidence="2">
    <location>
        <position position="24"/>
    </location>
</feature>
<feature type="modified residue" description="Glycine amide" evidence="1">
    <location>
        <position position="33"/>
    </location>
</feature>
<gene>
    <name type="primary">GNRH1</name>
    <name type="synonym">GNRH</name>
    <name type="synonym">LHRH</name>
</gene>
<name>GON1_CAVPO</name>
<sequence length="92" mass="10279">MGLIPKLLAGLVLLTLCVENGSGQYWSYGVRPGGKRNIEPLVDSFQEMAKEIDQLAEPQHFECTLHQPRSPLRDLKGALESLMEEETGQKKI</sequence>
<reference key="1">
    <citation type="journal article" date="1997" name="Endocrinology">
        <title>Examination of guinea pig luteinizing hormone-releasing hormone gene reveals a unique decapeptide and existence of two transcripts in the brain.</title>
        <authorList>
            <person name="Jimenez-Linan M."/>
            <person name="Rubin B.S."/>
            <person name="King J.C."/>
        </authorList>
    </citation>
    <scope>NUCLEOTIDE SEQUENCE [MRNA]</scope>
    <source>
        <strain>Hartley</strain>
        <tissue>Hypothalamus</tissue>
    </source>
</reference>